<dbReference type="EC" id="4.6.1.17" evidence="1"/>
<dbReference type="EMBL" id="AM774415">
    <property type="protein sequence ID" value="CAP13908.1"/>
    <property type="molecule type" value="Genomic_DNA"/>
</dbReference>
<dbReference type="RefSeq" id="WP_010902923.1">
    <property type="nucleotide sequence ID" value="NC_010364.1"/>
</dbReference>
<dbReference type="SMR" id="B0R591"/>
<dbReference type="EnsemblBacteria" id="CAP13908">
    <property type="protein sequence ID" value="CAP13908"/>
    <property type="gene ID" value="OE_2825F"/>
</dbReference>
<dbReference type="GeneID" id="89342699"/>
<dbReference type="KEGG" id="hsl:OE_2825F"/>
<dbReference type="HOGENOM" id="CLU_074693_1_2_2"/>
<dbReference type="PhylomeDB" id="B0R591"/>
<dbReference type="UniPathway" id="UPA00344"/>
<dbReference type="Proteomes" id="UP000001321">
    <property type="component" value="Chromosome"/>
</dbReference>
<dbReference type="GO" id="GO:0061799">
    <property type="term" value="F:cyclic pyranopterin monophosphate synthase activity"/>
    <property type="evidence" value="ECO:0007669"/>
    <property type="project" value="UniProtKB-UniRule"/>
</dbReference>
<dbReference type="GO" id="GO:0006777">
    <property type="term" value="P:Mo-molybdopterin cofactor biosynthetic process"/>
    <property type="evidence" value="ECO:0007669"/>
    <property type="project" value="UniProtKB-UniRule"/>
</dbReference>
<dbReference type="CDD" id="cd01419">
    <property type="entry name" value="MoaC_A"/>
    <property type="match status" value="1"/>
</dbReference>
<dbReference type="Gene3D" id="3.30.70.640">
    <property type="entry name" value="Molybdopterin cofactor biosynthesis C (MoaC) domain"/>
    <property type="match status" value="1"/>
</dbReference>
<dbReference type="HAMAP" id="MF_01224_A">
    <property type="entry name" value="MoaC_A"/>
    <property type="match status" value="1"/>
</dbReference>
<dbReference type="InterPro" id="IPR023047">
    <property type="entry name" value="Mo_CF_biosynth-C_arc"/>
</dbReference>
<dbReference type="InterPro" id="IPR023045">
    <property type="entry name" value="MoaC"/>
</dbReference>
<dbReference type="InterPro" id="IPR036522">
    <property type="entry name" value="MoaC_sf"/>
</dbReference>
<dbReference type="InterPro" id="IPR002820">
    <property type="entry name" value="Mopterin_CF_biosynth-C_dom"/>
</dbReference>
<dbReference type="NCBIfam" id="TIGR00581">
    <property type="entry name" value="moaC"/>
    <property type="match status" value="1"/>
</dbReference>
<dbReference type="NCBIfam" id="NF008999">
    <property type="entry name" value="PRK12343.1"/>
    <property type="match status" value="1"/>
</dbReference>
<dbReference type="Pfam" id="PF01967">
    <property type="entry name" value="MoaC"/>
    <property type="match status" value="1"/>
</dbReference>
<dbReference type="SUPFAM" id="SSF55040">
    <property type="entry name" value="Molybdenum cofactor biosynthesis protein C, MoaC"/>
    <property type="match status" value="1"/>
</dbReference>
<evidence type="ECO:0000255" key="1">
    <source>
        <dbReference type="HAMAP-Rule" id="MF_01224"/>
    </source>
</evidence>
<evidence type="ECO:0000256" key="2">
    <source>
        <dbReference type="SAM" id="MobiDB-lite"/>
    </source>
</evidence>
<comment type="function">
    <text evidence="1">Catalyzes the conversion of (8S)-3',8-cyclo-7,8-dihydroguanosine 5'-triphosphate to cyclic pyranopterin monophosphate (cPMP).</text>
</comment>
<comment type="catalytic activity">
    <reaction evidence="1">
        <text>(8S)-3',8-cyclo-7,8-dihydroguanosine 5'-triphosphate = cyclic pyranopterin phosphate + diphosphate</text>
        <dbReference type="Rhea" id="RHEA:49580"/>
        <dbReference type="ChEBI" id="CHEBI:33019"/>
        <dbReference type="ChEBI" id="CHEBI:59648"/>
        <dbReference type="ChEBI" id="CHEBI:131766"/>
        <dbReference type="EC" id="4.6.1.17"/>
    </reaction>
</comment>
<comment type="pathway">
    <text evidence="1">Cofactor biosynthesis; molybdopterin biosynthesis.</text>
</comment>
<comment type="subunit">
    <text evidence="1">Homohexamer; trimer of dimers.</text>
</comment>
<comment type="similarity">
    <text evidence="1">Belongs to the MoaC family.</text>
</comment>
<feature type="chain" id="PRO_1000139272" description="Probable cyclic pyranopterin monophosphate synthase">
    <location>
        <begin position="1"/>
        <end position="163"/>
    </location>
</feature>
<feature type="region of interest" description="Disordered" evidence="2">
    <location>
        <begin position="1"/>
        <end position="23"/>
    </location>
</feature>
<feature type="active site" evidence="1">
    <location>
        <position position="131"/>
    </location>
</feature>
<feature type="binding site" evidence="1">
    <location>
        <begin position="80"/>
        <end position="82"/>
    </location>
    <ligand>
        <name>substrate</name>
    </ligand>
</feature>
<feature type="binding site" evidence="1">
    <location>
        <begin position="116"/>
        <end position="117"/>
    </location>
    <ligand>
        <name>substrate</name>
    </ligand>
</feature>
<gene>
    <name evidence="1" type="primary">moaC</name>
    <name type="ordered locus">OE_2825F</name>
</gene>
<organism>
    <name type="scientific">Halobacterium salinarum (strain ATCC 29341 / DSM 671 / R1)</name>
    <dbReference type="NCBI Taxonomy" id="478009"/>
    <lineage>
        <taxon>Archaea</taxon>
        <taxon>Methanobacteriati</taxon>
        <taxon>Methanobacteriota</taxon>
        <taxon>Stenosarchaea group</taxon>
        <taxon>Halobacteria</taxon>
        <taxon>Halobacteriales</taxon>
        <taxon>Halobacteriaceae</taxon>
        <taxon>Halobacterium</taxon>
        <taxon>Halobacterium salinarum NRC-34001</taxon>
    </lineage>
</organism>
<name>MOAC_HALS3</name>
<sequence length="163" mass="17306">MPDGDDDALTHTTADGDAQMVDVGSKPDTARRAVASGDLHLAESTIDAVRDDGIGKGNVLATARVGAIQAVKHTWETIPMCHQIPITNVDTTFDVRDDRVVLEVAVETTGKTGCEMEALEGVTTGLNVVWDMVKAAEKDADGQYPGTAIENVGVDTKEKHHPE</sequence>
<accession>B0R591</accession>
<keyword id="KW-0456">Lyase</keyword>
<keyword id="KW-0501">Molybdenum cofactor biosynthesis</keyword>
<protein>
    <recommendedName>
        <fullName evidence="1">Probable cyclic pyranopterin monophosphate synthase</fullName>
        <ecNumber evidence="1">4.6.1.17</ecNumber>
    </recommendedName>
    <alternativeName>
        <fullName evidence="1">Molybdenum cofactor biosynthesis protein C</fullName>
    </alternativeName>
</protein>
<reference key="1">
    <citation type="journal article" date="2008" name="Genomics">
        <title>Evolution in the laboratory: the genome of Halobacterium salinarum strain R1 compared to that of strain NRC-1.</title>
        <authorList>
            <person name="Pfeiffer F."/>
            <person name="Schuster S.C."/>
            <person name="Broicher A."/>
            <person name="Falb M."/>
            <person name="Palm P."/>
            <person name="Rodewald K."/>
            <person name="Ruepp A."/>
            <person name="Soppa J."/>
            <person name="Tittor J."/>
            <person name="Oesterhelt D."/>
        </authorList>
    </citation>
    <scope>NUCLEOTIDE SEQUENCE [LARGE SCALE GENOMIC DNA]</scope>
    <source>
        <strain>ATCC 29341 / DSM 671 / R1</strain>
    </source>
</reference>
<proteinExistence type="inferred from homology"/>